<comment type="function">
    <text evidence="3 4">Interacts with target proteins during their translocation into the lumen of the endoplasmic reticulum. Protects unfolded target proteins against degradation during ER stress. May facilitate glycosylation of target proteins after termination of ER stress. May modulate the use of N-glycosylation sites on target proteins.</text>
</comment>
<comment type="subunit">
    <text evidence="4">Interacts with SEC61B, SEC61A1 and the SEC61 complex. Interacts with CANX.</text>
</comment>
<comment type="subcellular location">
    <subcellularLocation>
        <location evidence="4">Membrane</location>
        <topology evidence="4">Single-pass membrane protein</topology>
    </subcellularLocation>
    <subcellularLocation>
        <location evidence="4">Endoplasmic reticulum membrane</location>
        <topology evidence="4">Single-pass membrane protein</topology>
    </subcellularLocation>
</comment>
<comment type="tissue specificity">
    <text evidence="4">Detected in astrocytes, brain, lung, liver, kidney, spleen and testis.</text>
</comment>
<comment type="induction">
    <text evidence="4">Up-regulated in cultured astrocytes in response to hypoxia; levels remain elevated for at least 4 hours after return to normoxia. Up-regulated in ischemic brain.</text>
</comment>
<comment type="similarity">
    <text evidence="5">Belongs to the RAMP4 family.</text>
</comment>
<comment type="sequence caution" evidence="5">
    <conflict type="erroneous initiation">
        <sequence resource="EMBL-CDS" id="BAA81894"/>
    </conflict>
</comment>
<name>SERP1_RAT</name>
<sequence>MVAKQRIRMANEKHSKNITQRGNVAKTSRNAPEEKASVGPWLLALFIFVVCGSAIFQIIQSIRMGM</sequence>
<proteinExistence type="evidence at protein level"/>
<accession>Q9R2C1</accession>
<accession>Q794E7</accession>
<evidence type="ECO:0000255" key="1"/>
<evidence type="ECO:0000256" key="2">
    <source>
        <dbReference type="SAM" id="MobiDB-lite"/>
    </source>
</evidence>
<evidence type="ECO:0000269" key="3">
    <source>
    </source>
</evidence>
<evidence type="ECO:0000269" key="4">
    <source>
    </source>
</evidence>
<evidence type="ECO:0000305" key="5"/>
<reference key="1">
    <citation type="journal article" date="1999" name="J. Cell Biol.">
        <title>Stress-associated endoplasmic reticulum protein 1 (SERP1)/Ribosome-associated membrane protein 4 (RAMP4) stabilizes membrane proteins during stress and facilitates subsequent glycosylation.</title>
        <authorList>
            <person name="Yamaguchi A."/>
            <person name="Hori O."/>
            <person name="Stern D.M."/>
            <person name="Hartmann E."/>
            <person name="Ogawa S."/>
            <person name="Tohyama M."/>
        </authorList>
    </citation>
    <scope>NUCLEOTIDE SEQUENCE [MRNA]</scope>
    <scope>FUNCTION</scope>
    <scope>INDUCTION</scope>
    <scope>SUBCELLULAR LOCATION</scope>
    <scope>SUBUNIT</scope>
    <scope>TISSUE SPECIFICITY</scope>
</reference>
<reference key="2">
    <citation type="journal article" date="1999" name="EMBO J.">
        <title>Control of glycosylation of MHC class II-associated invariant chain by translocon-associated RAMP4.</title>
        <authorList>
            <person name="Schroeder K."/>
            <person name="Martoglio B."/>
            <person name="Hofmann M."/>
            <person name="Hoelscher C."/>
            <person name="Hartmann E."/>
            <person name="Prehn S."/>
            <person name="Rapoport T.A."/>
            <person name="Dobberstein B."/>
        </authorList>
    </citation>
    <scope>NUCLEOTIDE SEQUENCE [MRNA]</scope>
    <scope>FUNCTION</scope>
</reference>
<reference key="3">
    <citation type="journal article" date="2004" name="Genome Res.">
        <title>The status, quality, and expansion of the NIH full-length cDNA project: the Mammalian Gene Collection (MGC).</title>
        <authorList>
            <consortium name="The MGC Project Team"/>
        </authorList>
    </citation>
    <scope>NUCLEOTIDE SEQUENCE [LARGE SCALE MRNA]</scope>
    <source>
        <tissue>Prostate</tissue>
    </source>
</reference>
<protein>
    <recommendedName>
        <fullName>Stress-associated endoplasmic reticulum protein 1</fullName>
    </recommendedName>
    <alternativeName>
        <fullName>Ribosome-attached membrane protein 4</fullName>
    </alternativeName>
</protein>
<dbReference type="EMBL" id="AB018546">
    <property type="protein sequence ID" value="BAA81894.1"/>
    <property type="status" value="ALT_INIT"/>
    <property type="molecule type" value="mRNA"/>
</dbReference>
<dbReference type="EMBL" id="AF100470">
    <property type="protein sequence ID" value="AAC72398.1"/>
    <property type="molecule type" value="mRNA"/>
</dbReference>
<dbReference type="EMBL" id="AJ238236">
    <property type="protein sequence ID" value="CAB40910.1"/>
    <property type="molecule type" value="mRNA"/>
</dbReference>
<dbReference type="EMBL" id="BC061854">
    <property type="protein sequence ID" value="AAH61854.1"/>
    <property type="molecule type" value="mRNA"/>
</dbReference>
<dbReference type="RefSeq" id="NP_110462.1">
    <property type="nucleotide sequence ID" value="NM_030835.2"/>
</dbReference>
<dbReference type="SMR" id="Q9R2C1"/>
<dbReference type="FunCoup" id="Q9R2C1">
    <property type="interactions" value="1645"/>
</dbReference>
<dbReference type="STRING" id="10116.ENSRNOP00000017868"/>
<dbReference type="PhosphoSitePlus" id="Q9R2C1"/>
<dbReference type="PaxDb" id="10116-ENSRNOP00000017868"/>
<dbReference type="Ensembl" id="ENSRNOT00000017868.6">
    <property type="protein sequence ID" value="ENSRNOP00000017868.3"/>
    <property type="gene ID" value="ENSRNOG00000011763.6"/>
</dbReference>
<dbReference type="GeneID" id="80881"/>
<dbReference type="KEGG" id="rno:80881"/>
<dbReference type="UCSC" id="RGD:620790">
    <property type="organism name" value="rat"/>
</dbReference>
<dbReference type="AGR" id="RGD:620790"/>
<dbReference type="CTD" id="27230"/>
<dbReference type="RGD" id="620790">
    <property type="gene designation" value="Serp1"/>
</dbReference>
<dbReference type="eggNOG" id="KOG3491">
    <property type="taxonomic scope" value="Eukaryota"/>
</dbReference>
<dbReference type="GeneTree" id="ENSGT00940000161729"/>
<dbReference type="HOGENOM" id="CLU_160944_3_0_1"/>
<dbReference type="InParanoid" id="Q9R2C1"/>
<dbReference type="OMA" id="KSNDAFH"/>
<dbReference type="OrthoDB" id="65109at9989"/>
<dbReference type="PhylomeDB" id="Q9R2C1"/>
<dbReference type="TreeFam" id="TF313229"/>
<dbReference type="Reactome" id="R-RNO-9609523">
    <property type="pathway name" value="Insertion of tail-anchored proteins into the endoplasmic reticulum membrane"/>
</dbReference>
<dbReference type="PRO" id="PR:Q9R2C1"/>
<dbReference type="Proteomes" id="UP000002494">
    <property type="component" value="Chromosome 2"/>
</dbReference>
<dbReference type="Bgee" id="ENSRNOG00000011763">
    <property type="expression patterns" value="Expressed in pancreas and 20 other cell types or tissues"/>
</dbReference>
<dbReference type="GO" id="GO:0005881">
    <property type="term" value="C:cytoplasmic microtubule"/>
    <property type="evidence" value="ECO:0000250"/>
    <property type="project" value="UniProtKB"/>
</dbReference>
<dbReference type="GO" id="GO:0005783">
    <property type="term" value="C:endoplasmic reticulum"/>
    <property type="evidence" value="ECO:0000318"/>
    <property type="project" value="GO_Central"/>
</dbReference>
<dbReference type="GO" id="GO:0005789">
    <property type="term" value="C:endoplasmic reticulum membrane"/>
    <property type="evidence" value="ECO:0007669"/>
    <property type="project" value="UniProtKB-SubCell"/>
</dbReference>
<dbReference type="GO" id="GO:0030968">
    <property type="term" value="P:endoplasmic reticulum unfolded protein response"/>
    <property type="evidence" value="ECO:0000266"/>
    <property type="project" value="RGD"/>
</dbReference>
<dbReference type="GO" id="GO:0006006">
    <property type="term" value="P:glucose metabolic process"/>
    <property type="evidence" value="ECO:0000266"/>
    <property type="project" value="RGD"/>
</dbReference>
<dbReference type="GO" id="GO:0030073">
    <property type="term" value="P:insulin secretion"/>
    <property type="evidence" value="ECO:0000266"/>
    <property type="project" value="RGD"/>
</dbReference>
<dbReference type="GO" id="GO:0048644">
    <property type="term" value="P:muscle organ morphogenesis"/>
    <property type="evidence" value="ECO:0000266"/>
    <property type="project" value="RGD"/>
</dbReference>
<dbReference type="GO" id="GO:0060124">
    <property type="term" value="P:positive regulation of growth hormone secretion"/>
    <property type="evidence" value="ECO:0000266"/>
    <property type="project" value="RGD"/>
</dbReference>
<dbReference type="GO" id="GO:0032024">
    <property type="term" value="P:positive regulation of insulin secretion"/>
    <property type="evidence" value="ECO:0000266"/>
    <property type="project" value="RGD"/>
</dbReference>
<dbReference type="GO" id="GO:0046622">
    <property type="term" value="P:positive regulation of organ growth"/>
    <property type="evidence" value="ECO:0000266"/>
    <property type="project" value="RGD"/>
</dbReference>
<dbReference type="GO" id="GO:0045727">
    <property type="term" value="P:positive regulation of translation"/>
    <property type="evidence" value="ECO:0000266"/>
    <property type="project" value="RGD"/>
</dbReference>
<dbReference type="GO" id="GO:0009791">
    <property type="term" value="P:post-embryonic development"/>
    <property type="evidence" value="ECO:0000266"/>
    <property type="project" value="RGD"/>
</dbReference>
<dbReference type="GO" id="GO:0001501">
    <property type="term" value="P:skeletal system development"/>
    <property type="evidence" value="ECO:0000266"/>
    <property type="project" value="RGD"/>
</dbReference>
<dbReference type="InterPro" id="IPR010580">
    <property type="entry name" value="ER_stress-assoc"/>
</dbReference>
<dbReference type="PANTHER" id="PTHR15601">
    <property type="entry name" value="STRESS ASSOCIATED ENDOPLASMIC RETICULUM PROTEIN SERP1/RAMP4"/>
    <property type="match status" value="1"/>
</dbReference>
<dbReference type="PANTHER" id="PTHR15601:SF14">
    <property type="entry name" value="STRESS-ASSOCIATED ENDOPLASMIC RETICULUM PROTEIN 1"/>
    <property type="match status" value="1"/>
</dbReference>
<dbReference type="Pfam" id="PF06624">
    <property type="entry name" value="RAMP4"/>
    <property type="match status" value="1"/>
</dbReference>
<organism>
    <name type="scientific">Rattus norvegicus</name>
    <name type="common">Rat</name>
    <dbReference type="NCBI Taxonomy" id="10116"/>
    <lineage>
        <taxon>Eukaryota</taxon>
        <taxon>Metazoa</taxon>
        <taxon>Chordata</taxon>
        <taxon>Craniata</taxon>
        <taxon>Vertebrata</taxon>
        <taxon>Euteleostomi</taxon>
        <taxon>Mammalia</taxon>
        <taxon>Eutheria</taxon>
        <taxon>Euarchontoglires</taxon>
        <taxon>Glires</taxon>
        <taxon>Rodentia</taxon>
        <taxon>Myomorpha</taxon>
        <taxon>Muroidea</taxon>
        <taxon>Muridae</taxon>
        <taxon>Murinae</taxon>
        <taxon>Rattus</taxon>
    </lineage>
</organism>
<feature type="chain" id="PRO_0000274797" description="Stress-associated endoplasmic reticulum protein 1">
    <location>
        <begin position="1"/>
        <end position="66"/>
    </location>
</feature>
<feature type="transmembrane region" description="Helical" evidence="1">
    <location>
        <begin position="39"/>
        <end position="59"/>
    </location>
</feature>
<feature type="region of interest" description="Disordered" evidence="2">
    <location>
        <begin position="1"/>
        <end position="31"/>
    </location>
</feature>
<feature type="compositionally biased region" description="Polar residues" evidence="2">
    <location>
        <begin position="17"/>
        <end position="30"/>
    </location>
</feature>
<gene>
    <name type="primary">Serp1</name>
    <name type="synonym">Ramp4</name>
</gene>
<keyword id="KW-0256">Endoplasmic reticulum</keyword>
<keyword id="KW-0472">Membrane</keyword>
<keyword id="KW-1185">Reference proteome</keyword>
<keyword id="KW-0812">Transmembrane</keyword>
<keyword id="KW-1133">Transmembrane helix</keyword>
<keyword id="KW-0834">Unfolded protein response</keyword>